<organism>
    <name type="scientific">Streptococcus agalactiae serotype V (strain ATCC BAA-611 / 2603 V/R)</name>
    <dbReference type="NCBI Taxonomy" id="208435"/>
    <lineage>
        <taxon>Bacteria</taxon>
        <taxon>Bacillati</taxon>
        <taxon>Bacillota</taxon>
        <taxon>Bacilli</taxon>
        <taxon>Lactobacillales</taxon>
        <taxon>Streptococcaceae</taxon>
        <taxon>Streptococcus</taxon>
    </lineage>
</organism>
<comment type="function">
    <text evidence="1">Catalyzes the attachment of tyrosine to tRNA(Tyr) in a two-step reaction: tyrosine is first activated by ATP to form Tyr-AMP and then transferred to the acceptor end of tRNA(Tyr).</text>
</comment>
<comment type="catalytic activity">
    <reaction evidence="1">
        <text>tRNA(Tyr) + L-tyrosine + ATP = L-tyrosyl-tRNA(Tyr) + AMP + diphosphate + H(+)</text>
        <dbReference type="Rhea" id="RHEA:10220"/>
        <dbReference type="Rhea" id="RHEA-COMP:9706"/>
        <dbReference type="Rhea" id="RHEA-COMP:9707"/>
        <dbReference type="ChEBI" id="CHEBI:15378"/>
        <dbReference type="ChEBI" id="CHEBI:30616"/>
        <dbReference type="ChEBI" id="CHEBI:33019"/>
        <dbReference type="ChEBI" id="CHEBI:58315"/>
        <dbReference type="ChEBI" id="CHEBI:78442"/>
        <dbReference type="ChEBI" id="CHEBI:78536"/>
        <dbReference type="ChEBI" id="CHEBI:456215"/>
        <dbReference type="EC" id="6.1.1.1"/>
    </reaction>
</comment>
<comment type="subunit">
    <text evidence="1">Homodimer.</text>
</comment>
<comment type="subcellular location">
    <subcellularLocation>
        <location evidence="1">Cytoplasm</location>
    </subcellularLocation>
</comment>
<comment type="similarity">
    <text evidence="1">Belongs to the class-I aminoacyl-tRNA synthetase family. TyrS type 1 subfamily.</text>
</comment>
<keyword id="KW-0030">Aminoacyl-tRNA synthetase</keyword>
<keyword id="KW-0067">ATP-binding</keyword>
<keyword id="KW-0963">Cytoplasm</keyword>
<keyword id="KW-0436">Ligase</keyword>
<keyword id="KW-0547">Nucleotide-binding</keyword>
<keyword id="KW-0648">Protein biosynthesis</keyword>
<keyword id="KW-1185">Reference proteome</keyword>
<keyword id="KW-0694">RNA-binding</keyword>
<reference key="1">
    <citation type="journal article" date="2002" name="Proc. Natl. Acad. Sci. U.S.A.">
        <title>Complete genome sequence and comparative genomic analysis of an emerging human pathogen, serotype V Streptococcus agalactiae.</title>
        <authorList>
            <person name="Tettelin H."/>
            <person name="Masignani V."/>
            <person name="Cieslewicz M.J."/>
            <person name="Eisen J.A."/>
            <person name="Peterson S.N."/>
            <person name="Wessels M.R."/>
            <person name="Paulsen I.T."/>
            <person name="Nelson K.E."/>
            <person name="Margarit I."/>
            <person name="Read T.D."/>
            <person name="Madoff L.C."/>
            <person name="Wolf A.M."/>
            <person name="Beanan M.J."/>
            <person name="Brinkac L.M."/>
            <person name="Daugherty S.C."/>
            <person name="DeBoy R.T."/>
            <person name="Durkin A.S."/>
            <person name="Kolonay J.F."/>
            <person name="Madupu R."/>
            <person name="Lewis M.R."/>
            <person name="Radune D."/>
            <person name="Fedorova N.B."/>
            <person name="Scanlan D."/>
            <person name="Khouri H.M."/>
            <person name="Mulligan S."/>
            <person name="Carty H.A."/>
            <person name="Cline R.T."/>
            <person name="Van Aken S.E."/>
            <person name="Gill J."/>
            <person name="Scarselli M."/>
            <person name="Mora M."/>
            <person name="Iacobini E.T."/>
            <person name="Brettoni C."/>
            <person name="Galli G."/>
            <person name="Mariani M."/>
            <person name="Vegni F."/>
            <person name="Maione D."/>
            <person name="Rinaudo D."/>
            <person name="Rappuoli R."/>
            <person name="Telford J.L."/>
            <person name="Kasper D.L."/>
            <person name="Grandi G."/>
            <person name="Fraser C.M."/>
        </authorList>
    </citation>
    <scope>NUCLEOTIDE SEQUENCE [LARGE SCALE GENOMIC DNA]</scope>
    <source>
        <strain>ATCC BAA-611 / 2603 V/R</strain>
    </source>
</reference>
<protein>
    <recommendedName>
        <fullName evidence="1">Tyrosine--tRNA ligase</fullName>
        <ecNumber evidence="1">6.1.1.1</ecNumber>
    </recommendedName>
    <alternativeName>
        <fullName evidence="1">Tyrosyl-tRNA synthetase</fullName>
        <shortName evidence="1">TyrRS</shortName>
    </alternativeName>
</protein>
<sequence length="419" mass="47627">MNIFDELKERGLVFQTTDEDALRKALEEGSVSYYTGYDPTADSLHLGHLVAILTSRRLQLAGHKPYALVGGATGLIGDPSFKDVERSLQTKKTVVSWGNKIRGQLSNFLEFETGDNKAVLVNNYDWFSNISFIDFLRDVGKYFTVNYMMSKESVKKRIETGISYTEFAYQIMQGYDFYELNKNYNVTLQIGGSDQWGNMTAGTELIRRKSNGVSHVMTVPLITDSTGKKFGKSEGNAVWLDADKTSPYEMYQFWLNVMDADAVRFLKIFTFLSLKEIEDIRIQFEEAPHQRLAQKTLAREVVTLVHGEKAYKEAVNITEQLFAGNIKGLSVKELKQGLRGVPNYHVQTEDNLNIIDLLVTSGVVNSKRQAREDVSNGAIYINGDRIQDLEYTISENDKLENEITVIRRGKKKYFVLNFK</sequence>
<accession>Q8E241</accession>
<feature type="chain" id="PRO_0000234786" description="Tyrosine--tRNA ligase">
    <location>
        <begin position="1"/>
        <end position="419"/>
    </location>
</feature>
<feature type="domain" description="S4 RNA-binding" evidence="1">
    <location>
        <begin position="352"/>
        <end position="419"/>
    </location>
</feature>
<feature type="short sequence motif" description="'HIGH' region">
    <location>
        <begin position="39"/>
        <end position="48"/>
    </location>
</feature>
<feature type="short sequence motif" description="'KMSKS' region">
    <location>
        <begin position="229"/>
        <end position="233"/>
    </location>
</feature>
<feature type="binding site" evidence="1">
    <location>
        <position position="34"/>
    </location>
    <ligand>
        <name>L-tyrosine</name>
        <dbReference type="ChEBI" id="CHEBI:58315"/>
    </ligand>
</feature>
<feature type="binding site" evidence="1">
    <location>
        <position position="169"/>
    </location>
    <ligand>
        <name>L-tyrosine</name>
        <dbReference type="ChEBI" id="CHEBI:58315"/>
    </ligand>
</feature>
<feature type="binding site" evidence="1">
    <location>
        <position position="173"/>
    </location>
    <ligand>
        <name>L-tyrosine</name>
        <dbReference type="ChEBI" id="CHEBI:58315"/>
    </ligand>
</feature>
<feature type="binding site" evidence="1">
    <location>
        <position position="232"/>
    </location>
    <ligand>
        <name>ATP</name>
        <dbReference type="ChEBI" id="CHEBI:30616"/>
    </ligand>
</feature>
<evidence type="ECO:0000255" key="1">
    <source>
        <dbReference type="HAMAP-Rule" id="MF_02006"/>
    </source>
</evidence>
<dbReference type="EC" id="6.1.1.1" evidence="1"/>
<dbReference type="EMBL" id="AE009948">
    <property type="protein sequence ID" value="AAM99065.1"/>
    <property type="molecule type" value="Genomic_DNA"/>
</dbReference>
<dbReference type="RefSeq" id="NP_687193.1">
    <property type="nucleotide sequence ID" value="NC_004116.1"/>
</dbReference>
<dbReference type="RefSeq" id="WP_001019853.1">
    <property type="nucleotide sequence ID" value="NC_004116.1"/>
</dbReference>
<dbReference type="SMR" id="Q8E241"/>
<dbReference type="STRING" id="208435.SAG0158"/>
<dbReference type="GeneID" id="66885139"/>
<dbReference type="KEGG" id="sag:SAG0158"/>
<dbReference type="PATRIC" id="fig|208435.3.peg.158"/>
<dbReference type="HOGENOM" id="CLU_024003_0_3_9"/>
<dbReference type="OrthoDB" id="9804243at2"/>
<dbReference type="Proteomes" id="UP000000821">
    <property type="component" value="Chromosome"/>
</dbReference>
<dbReference type="GO" id="GO:0005829">
    <property type="term" value="C:cytosol"/>
    <property type="evidence" value="ECO:0007669"/>
    <property type="project" value="TreeGrafter"/>
</dbReference>
<dbReference type="GO" id="GO:0005524">
    <property type="term" value="F:ATP binding"/>
    <property type="evidence" value="ECO:0007669"/>
    <property type="project" value="UniProtKB-UniRule"/>
</dbReference>
<dbReference type="GO" id="GO:0003723">
    <property type="term" value="F:RNA binding"/>
    <property type="evidence" value="ECO:0007669"/>
    <property type="project" value="UniProtKB-KW"/>
</dbReference>
<dbReference type="GO" id="GO:0004831">
    <property type="term" value="F:tyrosine-tRNA ligase activity"/>
    <property type="evidence" value="ECO:0007669"/>
    <property type="project" value="UniProtKB-UniRule"/>
</dbReference>
<dbReference type="GO" id="GO:0006437">
    <property type="term" value="P:tyrosyl-tRNA aminoacylation"/>
    <property type="evidence" value="ECO:0007669"/>
    <property type="project" value="UniProtKB-UniRule"/>
</dbReference>
<dbReference type="CDD" id="cd00165">
    <property type="entry name" value="S4"/>
    <property type="match status" value="1"/>
</dbReference>
<dbReference type="CDD" id="cd00805">
    <property type="entry name" value="TyrRS_core"/>
    <property type="match status" value="1"/>
</dbReference>
<dbReference type="FunFam" id="1.10.240.10:FF:000001">
    <property type="entry name" value="Tyrosine--tRNA ligase"/>
    <property type="match status" value="1"/>
</dbReference>
<dbReference type="FunFam" id="3.40.50.620:FF:000008">
    <property type="entry name" value="Tyrosine--tRNA ligase"/>
    <property type="match status" value="1"/>
</dbReference>
<dbReference type="Gene3D" id="3.40.50.620">
    <property type="entry name" value="HUPs"/>
    <property type="match status" value="1"/>
</dbReference>
<dbReference type="Gene3D" id="3.10.290.10">
    <property type="entry name" value="RNA-binding S4 domain"/>
    <property type="match status" value="1"/>
</dbReference>
<dbReference type="Gene3D" id="1.10.240.10">
    <property type="entry name" value="Tyrosyl-Transfer RNA Synthetase"/>
    <property type="match status" value="1"/>
</dbReference>
<dbReference type="HAMAP" id="MF_02006">
    <property type="entry name" value="Tyr_tRNA_synth_type1"/>
    <property type="match status" value="1"/>
</dbReference>
<dbReference type="InterPro" id="IPR001412">
    <property type="entry name" value="aa-tRNA-synth_I_CS"/>
</dbReference>
<dbReference type="InterPro" id="IPR002305">
    <property type="entry name" value="aa-tRNA-synth_Ic"/>
</dbReference>
<dbReference type="InterPro" id="IPR014729">
    <property type="entry name" value="Rossmann-like_a/b/a_fold"/>
</dbReference>
<dbReference type="InterPro" id="IPR002942">
    <property type="entry name" value="S4_RNA-bd"/>
</dbReference>
<dbReference type="InterPro" id="IPR036986">
    <property type="entry name" value="S4_RNA-bd_sf"/>
</dbReference>
<dbReference type="InterPro" id="IPR054608">
    <property type="entry name" value="SYY-like_C"/>
</dbReference>
<dbReference type="InterPro" id="IPR002307">
    <property type="entry name" value="Tyr-tRNA-ligase"/>
</dbReference>
<dbReference type="InterPro" id="IPR024088">
    <property type="entry name" value="Tyr-tRNA-ligase_bac-type"/>
</dbReference>
<dbReference type="InterPro" id="IPR024107">
    <property type="entry name" value="Tyr-tRNA-ligase_bac_1"/>
</dbReference>
<dbReference type="NCBIfam" id="TIGR00234">
    <property type="entry name" value="tyrS"/>
    <property type="match status" value="1"/>
</dbReference>
<dbReference type="PANTHER" id="PTHR11766:SF0">
    <property type="entry name" value="TYROSINE--TRNA LIGASE, MITOCHONDRIAL"/>
    <property type="match status" value="1"/>
</dbReference>
<dbReference type="PANTHER" id="PTHR11766">
    <property type="entry name" value="TYROSYL-TRNA SYNTHETASE"/>
    <property type="match status" value="1"/>
</dbReference>
<dbReference type="Pfam" id="PF22421">
    <property type="entry name" value="SYY_C-terminal"/>
    <property type="match status" value="1"/>
</dbReference>
<dbReference type="Pfam" id="PF00579">
    <property type="entry name" value="tRNA-synt_1b"/>
    <property type="match status" value="1"/>
</dbReference>
<dbReference type="PRINTS" id="PR01040">
    <property type="entry name" value="TRNASYNTHTYR"/>
</dbReference>
<dbReference type="SMART" id="SM00363">
    <property type="entry name" value="S4"/>
    <property type="match status" value="1"/>
</dbReference>
<dbReference type="SUPFAM" id="SSF55174">
    <property type="entry name" value="Alpha-L RNA-binding motif"/>
    <property type="match status" value="1"/>
</dbReference>
<dbReference type="SUPFAM" id="SSF52374">
    <property type="entry name" value="Nucleotidylyl transferase"/>
    <property type="match status" value="1"/>
</dbReference>
<dbReference type="PROSITE" id="PS00178">
    <property type="entry name" value="AA_TRNA_LIGASE_I"/>
    <property type="match status" value="1"/>
</dbReference>
<dbReference type="PROSITE" id="PS50889">
    <property type="entry name" value="S4"/>
    <property type="match status" value="1"/>
</dbReference>
<proteinExistence type="inferred from homology"/>
<name>SYY_STRA5</name>
<gene>
    <name evidence="1" type="primary">tyrS</name>
    <name type="ordered locus">SAG0158</name>
</gene>